<accession>P76544</accession>
<proteinExistence type="predicted"/>
<name>YFFM_ECOLI</name>
<protein>
    <recommendedName>
        <fullName>Uncharacterized protein YffM</fullName>
    </recommendedName>
</protein>
<dbReference type="EMBL" id="U00096">
    <property type="protein sequence ID" value="AAC75497.1"/>
    <property type="molecule type" value="Genomic_DNA"/>
</dbReference>
<dbReference type="PIR" id="C65019">
    <property type="entry name" value="C65019"/>
</dbReference>
<dbReference type="RefSeq" id="NP_416939.1">
    <property type="nucleotide sequence ID" value="NC_000913.3"/>
</dbReference>
<dbReference type="RefSeq" id="WP_010723122.1">
    <property type="nucleotide sequence ID" value="NZ_JACEFS010000004.1"/>
</dbReference>
<dbReference type="SMR" id="P76544"/>
<dbReference type="FunCoup" id="P76544">
    <property type="interactions" value="21"/>
</dbReference>
<dbReference type="STRING" id="511145.b2444"/>
<dbReference type="PaxDb" id="511145-b2444"/>
<dbReference type="EnsemblBacteria" id="AAC75497">
    <property type="protein sequence ID" value="AAC75497"/>
    <property type="gene ID" value="b2444"/>
</dbReference>
<dbReference type="GeneID" id="946921"/>
<dbReference type="KEGG" id="eco:b2444"/>
<dbReference type="PATRIC" id="fig|511145.12.peg.2538"/>
<dbReference type="EchoBASE" id="EB3926"/>
<dbReference type="InParanoid" id="P76544"/>
<dbReference type="BioCyc" id="EcoCyc:G7274-MONOMER"/>
<dbReference type="PRO" id="PR:P76544"/>
<dbReference type="Proteomes" id="UP000000625">
    <property type="component" value="Chromosome"/>
</dbReference>
<reference key="1">
    <citation type="journal article" date="1997" name="Science">
        <title>The complete genome sequence of Escherichia coli K-12.</title>
        <authorList>
            <person name="Blattner F.R."/>
            <person name="Plunkett G. III"/>
            <person name="Bloch C.A."/>
            <person name="Perna N.T."/>
            <person name="Burland V."/>
            <person name="Riley M."/>
            <person name="Collado-Vides J."/>
            <person name="Glasner J.D."/>
            <person name="Rode C.K."/>
            <person name="Mayhew G.F."/>
            <person name="Gregor J."/>
            <person name="Davis N.W."/>
            <person name="Kirkpatrick H.A."/>
            <person name="Goeden M.A."/>
            <person name="Rose D.J."/>
            <person name="Mau B."/>
            <person name="Shao Y."/>
        </authorList>
    </citation>
    <scope>NUCLEOTIDE SEQUENCE [LARGE SCALE GENOMIC DNA]</scope>
    <source>
        <strain>K12 / MG1655 / ATCC 47076</strain>
    </source>
</reference>
<gene>
    <name type="primary">yffM</name>
    <name type="ordered locus">b2444</name>
</gene>
<sequence>MMVIRHECPSYCIAQKRVALREFSELVLGTLSLLLEQKTNGKCSASLYDCSEEEKLFVKRLKLIKADIHAQLKACDCDISE</sequence>
<feature type="chain" id="PRO_0000169233" description="Uncharacterized protein YffM">
    <location>
        <begin position="1"/>
        <end position="81"/>
    </location>
</feature>
<organism>
    <name type="scientific">Escherichia coli (strain K12)</name>
    <dbReference type="NCBI Taxonomy" id="83333"/>
    <lineage>
        <taxon>Bacteria</taxon>
        <taxon>Pseudomonadati</taxon>
        <taxon>Pseudomonadota</taxon>
        <taxon>Gammaproteobacteria</taxon>
        <taxon>Enterobacterales</taxon>
        <taxon>Enterobacteriaceae</taxon>
        <taxon>Escherichia</taxon>
    </lineage>
</organism>
<keyword id="KW-1185">Reference proteome</keyword>